<comment type="catalytic activity">
    <reaction evidence="1">
        <text>urea + 2 H2O + H(+) = hydrogencarbonate + 2 NH4(+)</text>
        <dbReference type="Rhea" id="RHEA:20557"/>
        <dbReference type="ChEBI" id="CHEBI:15377"/>
        <dbReference type="ChEBI" id="CHEBI:15378"/>
        <dbReference type="ChEBI" id="CHEBI:16199"/>
        <dbReference type="ChEBI" id="CHEBI:17544"/>
        <dbReference type="ChEBI" id="CHEBI:28938"/>
        <dbReference type="EC" id="3.5.1.5"/>
    </reaction>
</comment>
<comment type="pathway">
    <text evidence="1">Nitrogen metabolism; urea degradation; CO(2) and NH(3) from urea (urease route): step 1/1.</text>
</comment>
<comment type="subunit">
    <text evidence="1">Heterotrimer of UreA (gamma), UreB (beta) and UreC (alpha) subunits. Three heterotrimers associate to form the active enzyme.</text>
</comment>
<comment type="subcellular location">
    <subcellularLocation>
        <location evidence="1">Cytoplasm</location>
    </subcellularLocation>
</comment>
<comment type="similarity">
    <text evidence="1">Belongs to the urease gamma subunit family.</text>
</comment>
<proteinExistence type="inferred from homology"/>
<reference key="1">
    <citation type="submission" date="2007-06" db="EMBL/GenBank/DDBJ databases">
        <title>Complete sequence of Marinomonas sp. MWYL1.</title>
        <authorList>
            <consortium name="US DOE Joint Genome Institute"/>
            <person name="Copeland A."/>
            <person name="Lucas S."/>
            <person name="Lapidus A."/>
            <person name="Barry K."/>
            <person name="Glavina del Rio T."/>
            <person name="Dalin E."/>
            <person name="Tice H."/>
            <person name="Pitluck S."/>
            <person name="Kiss H."/>
            <person name="Brettin T."/>
            <person name="Bruce D."/>
            <person name="Detter J.C."/>
            <person name="Han C."/>
            <person name="Schmutz J."/>
            <person name="Larimer F."/>
            <person name="Land M."/>
            <person name="Hauser L."/>
            <person name="Kyrpides N."/>
            <person name="Kim E."/>
            <person name="Johnston A.W.B."/>
            <person name="Todd J.D."/>
            <person name="Rogers R."/>
            <person name="Wexler M."/>
            <person name="Bond P.L."/>
            <person name="Li Y."/>
            <person name="Richardson P."/>
        </authorList>
    </citation>
    <scope>NUCLEOTIDE SEQUENCE [LARGE SCALE GENOMIC DNA]</scope>
    <source>
        <strain>MWYL1</strain>
    </source>
</reference>
<keyword id="KW-0963">Cytoplasm</keyword>
<keyword id="KW-0378">Hydrolase</keyword>
<dbReference type="EC" id="3.5.1.5" evidence="1"/>
<dbReference type="EMBL" id="CP000749">
    <property type="protein sequence ID" value="ABR69885.1"/>
    <property type="molecule type" value="Genomic_DNA"/>
</dbReference>
<dbReference type="SMR" id="A6VTV6"/>
<dbReference type="STRING" id="400668.Mmwyl1_0954"/>
<dbReference type="KEGG" id="mmw:Mmwyl1_0954"/>
<dbReference type="eggNOG" id="COG0831">
    <property type="taxonomic scope" value="Bacteria"/>
</dbReference>
<dbReference type="HOGENOM" id="CLU_145825_1_0_6"/>
<dbReference type="OrthoDB" id="9797217at2"/>
<dbReference type="UniPathway" id="UPA00258">
    <property type="reaction ID" value="UER00370"/>
</dbReference>
<dbReference type="GO" id="GO:0005737">
    <property type="term" value="C:cytoplasm"/>
    <property type="evidence" value="ECO:0007669"/>
    <property type="project" value="UniProtKB-SubCell"/>
</dbReference>
<dbReference type="GO" id="GO:0016151">
    <property type="term" value="F:nickel cation binding"/>
    <property type="evidence" value="ECO:0007669"/>
    <property type="project" value="InterPro"/>
</dbReference>
<dbReference type="GO" id="GO:0009039">
    <property type="term" value="F:urease activity"/>
    <property type="evidence" value="ECO:0007669"/>
    <property type="project" value="UniProtKB-UniRule"/>
</dbReference>
<dbReference type="GO" id="GO:0043419">
    <property type="term" value="P:urea catabolic process"/>
    <property type="evidence" value="ECO:0007669"/>
    <property type="project" value="UniProtKB-UniRule"/>
</dbReference>
<dbReference type="CDD" id="cd00390">
    <property type="entry name" value="Urease_gamma"/>
    <property type="match status" value="1"/>
</dbReference>
<dbReference type="Gene3D" id="3.30.280.10">
    <property type="entry name" value="Urease, gamma-like subunit"/>
    <property type="match status" value="1"/>
</dbReference>
<dbReference type="HAMAP" id="MF_00739">
    <property type="entry name" value="Urease_gamma"/>
    <property type="match status" value="1"/>
</dbReference>
<dbReference type="InterPro" id="IPR012010">
    <property type="entry name" value="Urease_gamma"/>
</dbReference>
<dbReference type="InterPro" id="IPR002026">
    <property type="entry name" value="Urease_gamma/gamma-beta_su"/>
</dbReference>
<dbReference type="InterPro" id="IPR036463">
    <property type="entry name" value="Urease_gamma_sf"/>
</dbReference>
<dbReference type="InterPro" id="IPR050069">
    <property type="entry name" value="Urease_subunit"/>
</dbReference>
<dbReference type="NCBIfam" id="NF009712">
    <property type="entry name" value="PRK13241.1"/>
    <property type="match status" value="1"/>
</dbReference>
<dbReference type="NCBIfam" id="TIGR00193">
    <property type="entry name" value="urease_gam"/>
    <property type="match status" value="1"/>
</dbReference>
<dbReference type="PANTHER" id="PTHR33569">
    <property type="entry name" value="UREASE"/>
    <property type="match status" value="1"/>
</dbReference>
<dbReference type="PANTHER" id="PTHR33569:SF1">
    <property type="entry name" value="UREASE"/>
    <property type="match status" value="1"/>
</dbReference>
<dbReference type="Pfam" id="PF00547">
    <property type="entry name" value="Urease_gamma"/>
    <property type="match status" value="1"/>
</dbReference>
<dbReference type="PIRSF" id="PIRSF001223">
    <property type="entry name" value="Urease_gamma"/>
    <property type="match status" value="1"/>
</dbReference>
<dbReference type="SUPFAM" id="SSF54111">
    <property type="entry name" value="Urease, gamma-subunit"/>
    <property type="match status" value="1"/>
</dbReference>
<evidence type="ECO:0000255" key="1">
    <source>
        <dbReference type="HAMAP-Rule" id="MF_00739"/>
    </source>
</evidence>
<name>URE3_MARMS</name>
<feature type="chain" id="PRO_1000083423" description="Urease subunit gamma">
    <location>
        <begin position="1"/>
        <end position="100"/>
    </location>
</feature>
<protein>
    <recommendedName>
        <fullName evidence="1">Urease subunit gamma</fullName>
        <ecNumber evidence="1">3.5.1.5</ecNumber>
    </recommendedName>
    <alternativeName>
        <fullName evidence="1">Urea amidohydrolase subunit gamma</fullName>
    </alternativeName>
</protein>
<organism>
    <name type="scientific">Marinomonas sp. (strain MWYL1)</name>
    <dbReference type="NCBI Taxonomy" id="400668"/>
    <lineage>
        <taxon>Bacteria</taxon>
        <taxon>Pseudomonadati</taxon>
        <taxon>Pseudomonadota</taxon>
        <taxon>Gammaproteobacteria</taxon>
        <taxon>Oceanospirillales</taxon>
        <taxon>Oceanospirillaceae</taxon>
        <taxon>Marinomonas</taxon>
    </lineage>
</organism>
<gene>
    <name evidence="1" type="primary">ureA</name>
    <name type="ordered locus">Mmwyl1_0954</name>
</gene>
<sequence length="100" mass="11138">MELLPREKDKLLVFTAALLAERRLNRGLKLNYPEAMAFITMEIIEGARDGKTVAELMAYGKTLLSAEQVMDGVVELIHEVQVEATFPDGTKLVTVHNPIN</sequence>
<accession>A6VTV6</accession>